<keyword id="KW-0067">ATP-binding</keyword>
<keyword id="KW-0315">Glutamine amidotransferase</keyword>
<keyword id="KW-0436">Ligase</keyword>
<keyword id="KW-0460">Magnesium</keyword>
<keyword id="KW-0479">Metal-binding</keyword>
<keyword id="KW-0547">Nucleotide-binding</keyword>
<keyword id="KW-0665">Pyrimidine biosynthesis</keyword>
<accession>Q1I644</accession>
<gene>
    <name evidence="1" type="primary">pyrG</name>
    <name type="ordered locus">PSEEN4202</name>
</gene>
<protein>
    <recommendedName>
        <fullName evidence="1">CTP synthase</fullName>
        <ecNumber evidence="1">6.3.4.2</ecNumber>
    </recommendedName>
    <alternativeName>
        <fullName evidence="1">Cytidine 5'-triphosphate synthase</fullName>
    </alternativeName>
    <alternativeName>
        <fullName evidence="1">Cytidine triphosphate synthetase</fullName>
        <shortName evidence="1">CTP synthetase</shortName>
        <shortName evidence="1">CTPS</shortName>
    </alternativeName>
    <alternativeName>
        <fullName evidence="1">UTP--ammonia ligase</fullName>
    </alternativeName>
</protein>
<name>PYRG_PSEE4</name>
<proteinExistence type="inferred from homology"/>
<organism>
    <name type="scientific">Pseudomonas entomophila (strain L48)</name>
    <dbReference type="NCBI Taxonomy" id="384676"/>
    <lineage>
        <taxon>Bacteria</taxon>
        <taxon>Pseudomonadati</taxon>
        <taxon>Pseudomonadota</taxon>
        <taxon>Gammaproteobacteria</taxon>
        <taxon>Pseudomonadales</taxon>
        <taxon>Pseudomonadaceae</taxon>
        <taxon>Pseudomonas</taxon>
    </lineage>
</organism>
<dbReference type="EC" id="6.3.4.2" evidence="1"/>
<dbReference type="EMBL" id="CT573326">
    <property type="protein sequence ID" value="CAK16891.1"/>
    <property type="molecule type" value="Genomic_DNA"/>
</dbReference>
<dbReference type="RefSeq" id="WP_011535262.1">
    <property type="nucleotide sequence ID" value="NC_008027.1"/>
</dbReference>
<dbReference type="SMR" id="Q1I644"/>
<dbReference type="STRING" id="384676.PSEEN4202"/>
<dbReference type="MEROPS" id="C26.964"/>
<dbReference type="GeneID" id="32807209"/>
<dbReference type="KEGG" id="pen:PSEEN4202"/>
<dbReference type="eggNOG" id="COG0504">
    <property type="taxonomic scope" value="Bacteria"/>
</dbReference>
<dbReference type="HOGENOM" id="CLU_011675_5_0_6"/>
<dbReference type="OrthoDB" id="9801107at2"/>
<dbReference type="UniPathway" id="UPA00159">
    <property type="reaction ID" value="UER00277"/>
</dbReference>
<dbReference type="Proteomes" id="UP000000658">
    <property type="component" value="Chromosome"/>
</dbReference>
<dbReference type="GO" id="GO:0005829">
    <property type="term" value="C:cytosol"/>
    <property type="evidence" value="ECO:0007669"/>
    <property type="project" value="TreeGrafter"/>
</dbReference>
<dbReference type="GO" id="GO:0005524">
    <property type="term" value="F:ATP binding"/>
    <property type="evidence" value="ECO:0007669"/>
    <property type="project" value="UniProtKB-KW"/>
</dbReference>
<dbReference type="GO" id="GO:0003883">
    <property type="term" value="F:CTP synthase activity"/>
    <property type="evidence" value="ECO:0007669"/>
    <property type="project" value="UniProtKB-UniRule"/>
</dbReference>
<dbReference type="GO" id="GO:0004359">
    <property type="term" value="F:glutaminase activity"/>
    <property type="evidence" value="ECO:0007669"/>
    <property type="project" value="RHEA"/>
</dbReference>
<dbReference type="GO" id="GO:0042802">
    <property type="term" value="F:identical protein binding"/>
    <property type="evidence" value="ECO:0007669"/>
    <property type="project" value="TreeGrafter"/>
</dbReference>
<dbReference type="GO" id="GO:0046872">
    <property type="term" value="F:metal ion binding"/>
    <property type="evidence" value="ECO:0007669"/>
    <property type="project" value="UniProtKB-KW"/>
</dbReference>
<dbReference type="GO" id="GO:0044210">
    <property type="term" value="P:'de novo' CTP biosynthetic process"/>
    <property type="evidence" value="ECO:0007669"/>
    <property type="project" value="UniProtKB-UniRule"/>
</dbReference>
<dbReference type="GO" id="GO:0019856">
    <property type="term" value="P:pyrimidine nucleobase biosynthetic process"/>
    <property type="evidence" value="ECO:0007669"/>
    <property type="project" value="TreeGrafter"/>
</dbReference>
<dbReference type="CDD" id="cd03113">
    <property type="entry name" value="CTPS_N"/>
    <property type="match status" value="1"/>
</dbReference>
<dbReference type="CDD" id="cd01746">
    <property type="entry name" value="GATase1_CTP_Synthase"/>
    <property type="match status" value="1"/>
</dbReference>
<dbReference type="FunFam" id="3.40.50.300:FF:000009">
    <property type="entry name" value="CTP synthase"/>
    <property type="match status" value="1"/>
</dbReference>
<dbReference type="FunFam" id="3.40.50.880:FF:000002">
    <property type="entry name" value="CTP synthase"/>
    <property type="match status" value="1"/>
</dbReference>
<dbReference type="Gene3D" id="3.40.50.880">
    <property type="match status" value="1"/>
</dbReference>
<dbReference type="Gene3D" id="3.40.50.300">
    <property type="entry name" value="P-loop containing nucleotide triphosphate hydrolases"/>
    <property type="match status" value="1"/>
</dbReference>
<dbReference type="HAMAP" id="MF_01227">
    <property type="entry name" value="PyrG"/>
    <property type="match status" value="1"/>
</dbReference>
<dbReference type="InterPro" id="IPR029062">
    <property type="entry name" value="Class_I_gatase-like"/>
</dbReference>
<dbReference type="InterPro" id="IPR004468">
    <property type="entry name" value="CTP_synthase"/>
</dbReference>
<dbReference type="InterPro" id="IPR017456">
    <property type="entry name" value="CTP_synthase_N"/>
</dbReference>
<dbReference type="InterPro" id="IPR017926">
    <property type="entry name" value="GATASE"/>
</dbReference>
<dbReference type="InterPro" id="IPR033828">
    <property type="entry name" value="GATase1_CTP_Synthase"/>
</dbReference>
<dbReference type="InterPro" id="IPR027417">
    <property type="entry name" value="P-loop_NTPase"/>
</dbReference>
<dbReference type="NCBIfam" id="NF003792">
    <property type="entry name" value="PRK05380.1"/>
    <property type="match status" value="1"/>
</dbReference>
<dbReference type="NCBIfam" id="TIGR00337">
    <property type="entry name" value="PyrG"/>
    <property type="match status" value="1"/>
</dbReference>
<dbReference type="PANTHER" id="PTHR11550">
    <property type="entry name" value="CTP SYNTHASE"/>
    <property type="match status" value="1"/>
</dbReference>
<dbReference type="PANTHER" id="PTHR11550:SF0">
    <property type="entry name" value="CTP SYNTHASE-RELATED"/>
    <property type="match status" value="1"/>
</dbReference>
<dbReference type="Pfam" id="PF06418">
    <property type="entry name" value="CTP_synth_N"/>
    <property type="match status" value="1"/>
</dbReference>
<dbReference type="Pfam" id="PF00117">
    <property type="entry name" value="GATase"/>
    <property type="match status" value="1"/>
</dbReference>
<dbReference type="SUPFAM" id="SSF52317">
    <property type="entry name" value="Class I glutamine amidotransferase-like"/>
    <property type="match status" value="1"/>
</dbReference>
<dbReference type="SUPFAM" id="SSF52540">
    <property type="entry name" value="P-loop containing nucleoside triphosphate hydrolases"/>
    <property type="match status" value="1"/>
</dbReference>
<dbReference type="PROSITE" id="PS51273">
    <property type="entry name" value="GATASE_TYPE_1"/>
    <property type="match status" value="1"/>
</dbReference>
<comment type="function">
    <text evidence="1">Catalyzes the ATP-dependent amination of UTP to CTP with either L-glutamine or ammonia as the source of nitrogen. Regulates intracellular CTP levels through interactions with the four ribonucleotide triphosphates.</text>
</comment>
<comment type="catalytic activity">
    <reaction evidence="1">
        <text>UTP + L-glutamine + ATP + H2O = CTP + L-glutamate + ADP + phosphate + 2 H(+)</text>
        <dbReference type="Rhea" id="RHEA:26426"/>
        <dbReference type="ChEBI" id="CHEBI:15377"/>
        <dbReference type="ChEBI" id="CHEBI:15378"/>
        <dbReference type="ChEBI" id="CHEBI:29985"/>
        <dbReference type="ChEBI" id="CHEBI:30616"/>
        <dbReference type="ChEBI" id="CHEBI:37563"/>
        <dbReference type="ChEBI" id="CHEBI:43474"/>
        <dbReference type="ChEBI" id="CHEBI:46398"/>
        <dbReference type="ChEBI" id="CHEBI:58359"/>
        <dbReference type="ChEBI" id="CHEBI:456216"/>
        <dbReference type="EC" id="6.3.4.2"/>
    </reaction>
</comment>
<comment type="catalytic activity">
    <reaction evidence="1">
        <text>L-glutamine + H2O = L-glutamate + NH4(+)</text>
        <dbReference type="Rhea" id="RHEA:15889"/>
        <dbReference type="ChEBI" id="CHEBI:15377"/>
        <dbReference type="ChEBI" id="CHEBI:28938"/>
        <dbReference type="ChEBI" id="CHEBI:29985"/>
        <dbReference type="ChEBI" id="CHEBI:58359"/>
    </reaction>
</comment>
<comment type="catalytic activity">
    <reaction evidence="1">
        <text>UTP + NH4(+) + ATP = CTP + ADP + phosphate + 2 H(+)</text>
        <dbReference type="Rhea" id="RHEA:16597"/>
        <dbReference type="ChEBI" id="CHEBI:15378"/>
        <dbReference type="ChEBI" id="CHEBI:28938"/>
        <dbReference type="ChEBI" id="CHEBI:30616"/>
        <dbReference type="ChEBI" id="CHEBI:37563"/>
        <dbReference type="ChEBI" id="CHEBI:43474"/>
        <dbReference type="ChEBI" id="CHEBI:46398"/>
        <dbReference type="ChEBI" id="CHEBI:456216"/>
    </reaction>
</comment>
<comment type="activity regulation">
    <text evidence="1">Allosterically activated by GTP, when glutamine is the substrate; GTP has no effect on the reaction when ammonia is the substrate. The allosteric effector GTP functions by stabilizing the protein conformation that binds the tetrahedral intermediate(s) formed during glutamine hydrolysis. Inhibited by the product CTP, via allosteric rather than competitive inhibition.</text>
</comment>
<comment type="pathway">
    <text evidence="1">Pyrimidine metabolism; CTP biosynthesis via de novo pathway; CTP from UDP: step 2/2.</text>
</comment>
<comment type="subunit">
    <text evidence="1">Homotetramer.</text>
</comment>
<comment type="miscellaneous">
    <text evidence="1">CTPSs have evolved a hybrid strategy for distinguishing between UTP and CTP. The overlapping regions of the product feedback inhibitory and substrate sites recognize a common feature in both compounds, the triphosphate moiety. To differentiate isosteric substrate and product pyrimidine rings, an additional pocket far from the expected kinase/ligase catalytic site, specifically recognizes the cytosine and ribose portions of the product inhibitor.</text>
</comment>
<comment type="similarity">
    <text evidence="1">Belongs to the CTP synthase family.</text>
</comment>
<sequence>MTRYIFVTGGVVSSLGKGIASASLAAILEARGLKVTMLKLDPYINVDPGTMSPFQHGEVFVTHDGAETDLDLGHYERFIRTTMTQNNNFTTGRIYEHVLRKERRGDYLGATIQVIPHITDEIKRRIIKGAGDADVALVEIGGTVGDIESQPFLEAIRQLRVEVGSKRAMLMHLTLVPYIATAGETKTKPTQHSVKELRSIGLQPDVLICRSDHPVDASSRRKIALFTNVEERAVISLEDVDTIYKIPGVLHAQGLDDFVVERFGLQCNSADLSEWDKVVDAKLNPEQEVTIAMVGKYMELLDAYKSLIEAMSHAGITNRTKVNLRYIDSEDIENQGTSLLEGADAILVPGGFGLRGVEGKITAVQYARENKVPYLGICLGMQVAVIEFARNVMGWKDANSTEFDRNSGHPVVGLITEWADATGAVETRTEASDLGGTMRLGAQDCQIVAGSKVHDCYGKDVITERHRHRYEVNNNLLPQLMDAGLVVSGRSEDGALVEVVESKDHPWFVACQFHPEFTSTPRDGHPLFSGFVKAALAQKNKA</sequence>
<reference key="1">
    <citation type="journal article" date="2006" name="Nat. Biotechnol.">
        <title>Complete genome sequence of the entomopathogenic and metabolically versatile soil bacterium Pseudomonas entomophila.</title>
        <authorList>
            <person name="Vodovar N."/>
            <person name="Vallenet D."/>
            <person name="Cruveiller S."/>
            <person name="Rouy Z."/>
            <person name="Barbe V."/>
            <person name="Acosta C."/>
            <person name="Cattolico L."/>
            <person name="Jubin C."/>
            <person name="Lajus A."/>
            <person name="Segurens B."/>
            <person name="Vacherie B."/>
            <person name="Wincker P."/>
            <person name="Weissenbach J."/>
            <person name="Lemaitre B."/>
            <person name="Medigue C."/>
            <person name="Boccard F."/>
        </authorList>
    </citation>
    <scope>NUCLEOTIDE SEQUENCE [LARGE SCALE GENOMIC DNA]</scope>
    <source>
        <strain>L48</strain>
    </source>
</reference>
<feature type="chain" id="PRO_1000139533" description="CTP synthase">
    <location>
        <begin position="1"/>
        <end position="542"/>
    </location>
</feature>
<feature type="domain" description="Glutamine amidotransferase type-1" evidence="1">
    <location>
        <begin position="290"/>
        <end position="541"/>
    </location>
</feature>
<feature type="region of interest" description="Amidoligase domain" evidence="1">
    <location>
        <begin position="1"/>
        <end position="265"/>
    </location>
</feature>
<feature type="active site" description="Nucleophile; for glutamine hydrolysis" evidence="1">
    <location>
        <position position="378"/>
    </location>
</feature>
<feature type="active site" evidence="1">
    <location>
        <position position="514"/>
    </location>
</feature>
<feature type="active site" evidence="1">
    <location>
        <position position="516"/>
    </location>
</feature>
<feature type="binding site" evidence="1">
    <location>
        <position position="13"/>
    </location>
    <ligand>
        <name>CTP</name>
        <dbReference type="ChEBI" id="CHEBI:37563"/>
        <note>allosteric inhibitor</note>
    </ligand>
</feature>
<feature type="binding site" evidence="1">
    <location>
        <position position="13"/>
    </location>
    <ligand>
        <name>UTP</name>
        <dbReference type="ChEBI" id="CHEBI:46398"/>
    </ligand>
</feature>
<feature type="binding site" evidence="1">
    <location>
        <begin position="14"/>
        <end position="19"/>
    </location>
    <ligand>
        <name>ATP</name>
        <dbReference type="ChEBI" id="CHEBI:30616"/>
    </ligand>
</feature>
<feature type="binding site" evidence="1">
    <location>
        <position position="71"/>
    </location>
    <ligand>
        <name>ATP</name>
        <dbReference type="ChEBI" id="CHEBI:30616"/>
    </ligand>
</feature>
<feature type="binding site" evidence="1">
    <location>
        <position position="71"/>
    </location>
    <ligand>
        <name>Mg(2+)</name>
        <dbReference type="ChEBI" id="CHEBI:18420"/>
    </ligand>
</feature>
<feature type="binding site" evidence="1">
    <location>
        <position position="139"/>
    </location>
    <ligand>
        <name>Mg(2+)</name>
        <dbReference type="ChEBI" id="CHEBI:18420"/>
    </ligand>
</feature>
<feature type="binding site" evidence="1">
    <location>
        <begin position="146"/>
        <end position="148"/>
    </location>
    <ligand>
        <name>CTP</name>
        <dbReference type="ChEBI" id="CHEBI:37563"/>
        <note>allosteric inhibitor</note>
    </ligand>
</feature>
<feature type="binding site" evidence="1">
    <location>
        <begin position="186"/>
        <end position="191"/>
    </location>
    <ligand>
        <name>CTP</name>
        <dbReference type="ChEBI" id="CHEBI:37563"/>
        <note>allosteric inhibitor</note>
    </ligand>
</feature>
<feature type="binding site" evidence="1">
    <location>
        <begin position="186"/>
        <end position="191"/>
    </location>
    <ligand>
        <name>UTP</name>
        <dbReference type="ChEBI" id="CHEBI:46398"/>
    </ligand>
</feature>
<feature type="binding site" evidence="1">
    <location>
        <position position="222"/>
    </location>
    <ligand>
        <name>CTP</name>
        <dbReference type="ChEBI" id="CHEBI:37563"/>
        <note>allosteric inhibitor</note>
    </ligand>
</feature>
<feature type="binding site" evidence="1">
    <location>
        <position position="222"/>
    </location>
    <ligand>
        <name>UTP</name>
        <dbReference type="ChEBI" id="CHEBI:46398"/>
    </ligand>
</feature>
<feature type="binding site" evidence="1">
    <location>
        <position position="351"/>
    </location>
    <ligand>
        <name>L-glutamine</name>
        <dbReference type="ChEBI" id="CHEBI:58359"/>
    </ligand>
</feature>
<feature type="binding site" evidence="1">
    <location>
        <begin position="379"/>
        <end position="382"/>
    </location>
    <ligand>
        <name>L-glutamine</name>
        <dbReference type="ChEBI" id="CHEBI:58359"/>
    </ligand>
</feature>
<feature type="binding site" evidence="1">
    <location>
        <position position="402"/>
    </location>
    <ligand>
        <name>L-glutamine</name>
        <dbReference type="ChEBI" id="CHEBI:58359"/>
    </ligand>
</feature>
<feature type="binding site" evidence="1">
    <location>
        <position position="469"/>
    </location>
    <ligand>
        <name>L-glutamine</name>
        <dbReference type="ChEBI" id="CHEBI:58359"/>
    </ligand>
</feature>
<evidence type="ECO:0000255" key="1">
    <source>
        <dbReference type="HAMAP-Rule" id="MF_01227"/>
    </source>
</evidence>